<name>MINE_RHIME</name>
<proteinExistence type="inferred from homology"/>
<reference key="1">
    <citation type="journal article" date="2001" name="Proc. Natl. Acad. Sci. U.S.A.">
        <title>The complete sequence of the 1,683-kb pSymB megaplasmid from the N2-fixing endosymbiont Sinorhizobium meliloti.</title>
        <authorList>
            <person name="Finan T.M."/>
            <person name="Weidner S."/>
            <person name="Wong K."/>
            <person name="Buhrmester J."/>
            <person name="Chain P."/>
            <person name="Vorhoelter F.J."/>
            <person name="Hernandez-Lucas I."/>
            <person name="Becker A."/>
            <person name="Cowie A."/>
            <person name="Gouzy J."/>
            <person name="Golding B."/>
            <person name="Puehler A."/>
        </authorList>
    </citation>
    <scope>NUCLEOTIDE SEQUENCE [LARGE SCALE GENOMIC DNA]</scope>
    <source>
        <strain>1021</strain>
    </source>
</reference>
<reference key="2">
    <citation type="journal article" date="2001" name="Science">
        <title>The composite genome of the legume symbiont Sinorhizobium meliloti.</title>
        <authorList>
            <person name="Galibert F."/>
            <person name="Finan T.M."/>
            <person name="Long S.R."/>
            <person name="Puehler A."/>
            <person name="Abola P."/>
            <person name="Ampe F."/>
            <person name="Barloy-Hubler F."/>
            <person name="Barnett M.J."/>
            <person name="Becker A."/>
            <person name="Boistard P."/>
            <person name="Bothe G."/>
            <person name="Boutry M."/>
            <person name="Bowser L."/>
            <person name="Buhrmester J."/>
            <person name="Cadieu E."/>
            <person name="Capela D."/>
            <person name="Chain P."/>
            <person name="Cowie A."/>
            <person name="Davis R.W."/>
            <person name="Dreano S."/>
            <person name="Federspiel N.A."/>
            <person name="Fisher R.F."/>
            <person name="Gloux S."/>
            <person name="Godrie T."/>
            <person name="Goffeau A."/>
            <person name="Golding B."/>
            <person name="Gouzy J."/>
            <person name="Gurjal M."/>
            <person name="Hernandez-Lucas I."/>
            <person name="Hong A."/>
            <person name="Huizar L."/>
            <person name="Hyman R.W."/>
            <person name="Jones T."/>
            <person name="Kahn D."/>
            <person name="Kahn M.L."/>
            <person name="Kalman S."/>
            <person name="Keating D.H."/>
            <person name="Kiss E."/>
            <person name="Komp C."/>
            <person name="Lelaure V."/>
            <person name="Masuy D."/>
            <person name="Palm C."/>
            <person name="Peck M.C."/>
            <person name="Pohl T.M."/>
            <person name="Portetelle D."/>
            <person name="Purnelle B."/>
            <person name="Ramsperger U."/>
            <person name="Surzycki R."/>
            <person name="Thebault P."/>
            <person name="Vandenbol M."/>
            <person name="Vorhoelter F.J."/>
            <person name="Weidner S."/>
            <person name="Wells D.H."/>
            <person name="Wong K."/>
            <person name="Yeh K.-C."/>
            <person name="Batut J."/>
        </authorList>
    </citation>
    <scope>NUCLEOTIDE SEQUENCE [LARGE SCALE GENOMIC DNA]</scope>
    <source>
        <strain>1021</strain>
    </source>
</reference>
<geneLocation type="plasmid">
    <name>pSymB</name>
    <name>megaplasmid 2</name>
</geneLocation>
<comment type="function">
    <text evidence="1">Prevents the cell division inhibition by proteins MinC and MinD at internal division sites while permitting inhibition at polar sites. This ensures cell division at the proper site by restricting the formation of a division septum at the midpoint of the long axis of the cell.</text>
</comment>
<comment type="similarity">
    <text evidence="1">Belongs to the MinE family.</text>
</comment>
<protein>
    <recommendedName>
        <fullName evidence="1">Cell division topological specificity factor</fullName>
    </recommendedName>
</protein>
<gene>
    <name evidence="1" type="primary">minE</name>
    <name type="ordered locus">RB1352</name>
    <name type="ORF">SMb21522</name>
</gene>
<feature type="chain" id="PRO_0000298175" description="Cell division topological specificity factor">
    <location>
        <begin position="1"/>
        <end position="87"/>
    </location>
</feature>
<accession>Q92TZ1</accession>
<keyword id="KW-0131">Cell cycle</keyword>
<keyword id="KW-0132">Cell division</keyword>
<keyword id="KW-0614">Plasmid</keyword>
<keyword id="KW-1185">Reference proteome</keyword>
<dbReference type="EMBL" id="AL591985">
    <property type="protein sequence ID" value="CAC49752.1"/>
    <property type="molecule type" value="Genomic_DNA"/>
</dbReference>
<dbReference type="PIR" id="H96010">
    <property type="entry name" value="H96010"/>
</dbReference>
<dbReference type="RefSeq" id="NP_437892.1">
    <property type="nucleotide sequence ID" value="NC_003078.1"/>
</dbReference>
<dbReference type="RefSeq" id="WP_003526351.1">
    <property type="nucleotide sequence ID" value="NC_003078.1"/>
</dbReference>
<dbReference type="SMR" id="Q92TZ1"/>
<dbReference type="EnsemblBacteria" id="CAC49752">
    <property type="protein sequence ID" value="CAC49752"/>
    <property type="gene ID" value="SM_b21522"/>
</dbReference>
<dbReference type="GeneID" id="89577580"/>
<dbReference type="KEGG" id="sme:SM_b21522"/>
<dbReference type="PATRIC" id="fig|266834.11.peg.6272"/>
<dbReference type="eggNOG" id="COG0851">
    <property type="taxonomic scope" value="Bacteria"/>
</dbReference>
<dbReference type="HOGENOM" id="CLU_137929_2_0_5"/>
<dbReference type="OrthoDB" id="9802655at2"/>
<dbReference type="PRO" id="PR:Q92TZ1"/>
<dbReference type="Proteomes" id="UP000001976">
    <property type="component" value="Plasmid pSymB"/>
</dbReference>
<dbReference type="GO" id="GO:0051301">
    <property type="term" value="P:cell division"/>
    <property type="evidence" value="ECO:0007669"/>
    <property type="project" value="UniProtKB-KW"/>
</dbReference>
<dbReference type="GO" id="GO:0032955">
    <property type="term" value="P:regulation of division septum assembly"/>
    <property type="evidence" value="ECO:0007669"/>
    <property type="project" value="InterPro"/>
</dbReference>
<dbReference type="Gene3D" id="3.30.1070.10">
    <property type="entry name" value="Cell division topological specificity factor MinE"/>
    <property type="match status" value="1"/>
</dbReference>
<dbReference type="HAMAP" id="MF_00262">
    <property type="entry name" value="MinE"/>
    <property type="match status" value="1"/>
</dbReference>
<dbReference type="InterPro" id="IPR005527">
    <property type="entry name" value="MinE"/>
</dbReference>
<dbReference type="InterPro" id="IPR036707">
    <property type="entry name" value="MinE_sf"/>
</dbReference>
<dbReference type="NCBIfam" id="TIGR01215">
    <property type="entry name" value="minE"/>
    <property type="match status" value="1"/>
</dbReference>
<dbReference type="NCBIfam" id="NF001422">
    <property type="entry name" value="PRK00296.1"/>
    <property type="match status" value="1"/>
</dbReference>
<dbReference type="Pfam" id="PF03776">
    <property type="entry name" value="MinE"/>
    <property type="match status" value="1"/>
</dbReference>
<dbReference type="SUPFAM" id="SSF55229">
    <property type="entry name" value="Cell division protein MinE topological specificity domain"/>
    <property type="match status" value="1"/>
</dbReference>
<organism>
    <name type="scientific">Rhizobium meliloti (strain 1021)</name>
    <name type="common">Ensifer meliloti</name>
    <name type="synonym">Sinorhizobium meliloti</name>
    <dbReference type="NCBI Taxonomy" id="266834"/>
    <lineage>
        <taxon>Bacteria</taxon>
        <taxon>Pseudomonadati</taxon>
        <taxon>Pseudomonadota</taxon>
        <taxon>Alphaproteobacteria</taxon>
        <taxon>Hyphomicrobiales</taxon>
        <taxon>Rhizobiaceae</taxon>
        <taxon>Sinorhizobium/Ensifer group</taxon>
        <taxon>Sinorhizobium</taxon>
    </lineage>
</organism>
<sequence length="87" mass="9711">MSIFRFFSKQTSAPTARERLQVLLAHERASVGQSDLVAVLREEILAVIAKHVQVDRDKVNVTMERGEHVTTLEVDIEIPMKAGVRAA</sequence>
<evidence type="ECO:0000255" key="1">
    <source>
        <dbReference type="HAMAP-Rule" id="MF_00262"/>
    </source>
</evidence>